<accession>P18901</accession>
<accession>P21669</accession>
<proteinExistence type="evidence at protein level"/>
<name>DRD1_RAT</name>
<sequence length="446" mass="49428">MAPNTSTMDEAGLPAERDFSFRILTACFLSLLILSTLLGNTLVCAAVIRFRHLRSKVTNFFVISLAVSDLLVAVLVMPWKAVAEIAGFWPLGPFCNIWVAFDIMCSTASILNLCVISVDRYWAISSPFQYERKMTPKAAFILISVAWTLSVLISFIPVQLSWHKAKPTWPLDGNFTSLEDTEDDNCDTRLSRTYAISSSLISFYIPVAIMIVTYTSIYRIAQKQIRRISALERAAVHAKNCQTTAGNGNPVECAQSESSFKMSFKRETKVLKTLSVIMGVFVCCWLPFFISNCMVPFCGSEETQPFCIDSITFDVFVWFGWANSSLNPIIYAFNADFQKAFSTLLGCYRLCPTTNNAIETVSINNNGAVVFSSHHEPRGSISKDCNLVYLIPHAVGSSEDLKKEEAGGIAKPLEKLSPALSVILDYDTDVSLEKIQPVTHSGQHST</sequence>
<dbReference type="EMBL" id="M35077">
    <property type="protein sequence ID" value="AAA70428.1"/>
    <property type="molecule type" value="mRNA"/>
</dbReference>
<dbReference type="EMBL" id="S46131">
    <property type="protein sequence ID" value="AAB23803.1"/>
    <property type="molecule type" value="Genomic_DNA"/>
</dbReference>
<dbReference type="PIR" id="A36049">
    <property type="entry name" value="DYRTD1"/>
</dbReference>
<dbReference type="SMR" id="P18901"/>
<dbReference type="BioGRID" id="246496">
    <property type="interactions" value="5"/>
</dbReference>
<dbReference type="CORUM" id="P18901"/>
<dbReference type="DIP" id="DIP-49024N"/>
<dbReference type="FunCoup" id="P18901">
    <property type="interactions" value="1327"/>
</dbReference>
<dbReference type="IntAct" id="P18901">
    <property type="interactions" value="3"/>
</dbReference>
<dbReference type="MINT" id="P18901"/>
<dbReference type="STRING" id="10116.ENSRNOP00000034820"/>
<dbReference type="BindingDB" id="P18901"/>
<dbReference type="ChEMBL" id="CHEMBL265"/>
<dbReference type="DrugCentral" id="P18901"/>
<dbReference type="GuidetoPHARMACOLOGY" id="214"/>
<dbReference type="GlyCosmos" id="P18901">
    <property type="glycosylation" value="1 site, No reported glycans"/>
</dbReference>
<dbReference type="GlyGen" id="P18901">
    <property type="glycosylation" value="1 site"/>
</dbReference>
<dbReference type="iPTMnet" id="P18901"/>
<dbReference type="PhosphoSitePlus" id="P18901"/>
<dbReference type="PaxDb" id="10116-ENSRNOP00000034820"/>
<dbReference type="AGR" id="RGD:2518"/>
<dbReference type="RGD" id="2518">
    <property type="gene designation" value="Drd1"/>
</dbReference>
<dbReference type="eggNOG" id="KOG3656">
    <property type="taxonomic scope" value="Eukaryota"/>
</dbReference>
<dbReference type="InParanoid" id="P18901"/>
<dbReference type="PhylomeDB" id="P18901"/>
<dbReference type="PRO" id="PR:P18901"/>
<dbReference type="Proteomes" id="UP000002494">
    <property type="component" value="Unplaced"/>
</dbReference>
<dbReference type="GO" id="GO:0030424">
    <property type="term" value="C:axon"/>
    <property type="evidence" value="ECO:0000314"/>
    <property type="project" value="RGD"/>
</dbReference>
<dbReference type="GO" id="GO:0043679">
    <property type="term" value="C:axon terminus"/>
    <property type="evidence" value="ECO:0000314"/>
    <property type="project" value="RGD"/>
</dbReference>
<dbReference type="GO" id="GO:0005901">
    <property type="term" value="C:caveola"/>
    <property type="evidence" value="ECO:0000314"/>
    <property type="project" value="RGD"/>
</dbReference>
<dbReference type="GO" id="GO:0009986">
    <property type="term" value="C:cell surface"/>
    <property type="evidence" value="ECO:0000314"/>
    <property type="project" value="RGD"/>
</dbReference>
<dbReference type="GO" id="GO:0060170">
    <property type="term" value="C:ciliary membrane"/>
    <property type="evidence" value="ECO:0000266"/>
    <property type="project" value="RGD"/>
</dbReference>
<dbReference type="GO" id="GO:0005929">
    <property type="term" value="C:cilium"/>
    <property type="evidence" value="ECO:0000266"/>
    <property type="project" value="RGD"/>
</dbReference>
<dbReference type="GO" id="GO:0030425">
    <property type="term" value="C:dendrite"/>
    <property type="evidence" value="ECO:0000314"/>
    <property type="project" value="RGD"/>
</dbReference>
<dbReference type="GO" id="GO:0043198">
    <property type="term" value="C:dendritic shaft"/>
    <property type="evidence" value="ECO:0000314"/>
    <property type="project" value="RGD"/>
</dbReference>
<dbReference type="GO" id="GO:0043197">
    <property type="term" value="C:dendritic spine"/>
    <property type="evidence" value="ECO:0000314"/>
    <property type="project" value="RGD"/>
</dbReference>
<dbReference type="GO" id="GO:0044327">
    <property type="term" value="C:dendritic spine head"/>
    <property type="evidence" value="ECO:0000314"/>
    <property type="project" value="RGD"/>
</dbReference>
<dbReference type="GO" id="GO:0044326">
    <property type="term" value="C:dendritic spine neck"/>
    <property type="evidence" value="ECO:0000314"/>
    <property type="project" value="RGD"/>
</dbReference>
<dbReference type="GO" id="GO:0012505">
    <property type="term" value="C:endomembrane system"/>
    <property type="evidence" value="ECO:0000266"/>
    <property type="project" value="RGD"/>
</dbReference>
<dbReference type="GO" id="GO:0005783">
    <property type="term" value="C:endoplasmic reticulum"/>
    <property type="evidence" value="ECO:0000266"/>
    <property type="project" value="RGD"/>
</dbReference>
<dbReference type="GO" id="GO:0005789">
    <property type="term" value="C:endoplasmic reticulum membrane"/>
    <property type="evidence" value="ECO:0007669"/>
    <property type="project" value="UniProtKB-SubCell"/>
</dbReference>
<dbReference type="GO" id="GO:0097648">
    <property type="term" value="C:G protein-coupled receptor complex"/>
    <property type="evidence" value="ECO:0000266"/>
    <property type="project" value="RGD"/>
</dbReference>
<dbReference type="GO" id="GO:0098982">
    <property type="term" value="C:GABA-ergic synapse"/>
    <property type="evidence" value="ECO:0000266"/>
    <property type="project" value="RGD"/>
</dbReference>
<dbReference type="GO" id="GO:0098978">
    <property type="term" value="C:glutamatergic synapse"/>
    <property type="evidence" value="ECO:0000314"/>
    <property type="project" value="SynGO"/>
</dbReference>
<dbReference type="GO" id="GO:0016020">
    <property type="term" value="C:membrane"/>
    <property type="evidence" value="ECO:0000266"/>
    <property type="project" value="RGD"/>
</dbReference>
<dbReference type="GO" id="GO:0043025">
    <property type="term" value="C:neuronal cell body"/>
    <property type="evidence" value="ECO:0000314"/>
    <property type="project" value="RGD"/>
</dbReference>
<dbReference type="GO" id="GO:0097730">
    <property type="term" value="C:non-motile cilium"/>
    <property type="evidence" value="ECO:0000266"/>
    <property type="project" value="RGD"/>
</dbReference>
<dbReference type="GO" id="GO:0005634">
    <property type="term" value="C:nucleus"/>
    <property type="evidence" value="ECO:0000266"/>
    <property type="project" value="RGD"/>
</dbReference>
<dbReference type="GO" id="GO:0005886">
    <property type="term" value="C:plasma membrane"/>
    <property type="evidence" value="ECO:0000314"/>
    <property type="project" value="BHF-UCL"/>
</dbReference>
<dbReference type="GO" id="GO:0045211">
    <property type="term" value="C:postsynaptic membrane"/>
    <property type="evidence" value="ECO:0000314"/>
    <property type="project" value="SynGO"/>
</dbReference>
<dbReference type="GO" id="GO:0042734">
    <property type="term" value="C:presynaptic membrane"/>
    <property type="evidence" value="ECO:0000314"/>
    <property type="project" value="SynGO"/>
</dbReference>
<dbReference type="GO" id="GO:0031701">
    <property type="term" value="F:angiotensin receptor binding"/>
    <property type="evidence" value="ECO:0000353"/>
    <property type="project" value="RGD"/>
</dbReference>
<dbReference type="GO" id="GO:1990763">
    <property type="term" value="F:arrestin family protein binding"/>
    <property type="evidence" value="ECO:0000266"/>
    <property type="project" value="RGD"/>
</dbReference>
<dbReference type="GO" id="GO:0051117">
    <property type="term" value="F:ATPase binding"/>
    <property type="evidence" value="ECO:0000353"/>
    <property type="project" value="RGD"/>
</dbReference>
<dbReference type="GO" id="GO:0031750">
    <property type="term" value="F:D3 dopamine receptor binding"/>
    <property type="evidence" value="ECO:0000353"/>
    <property type="project" value="RGD"/>
</dbReference>
<dbReference type="GO" id="GO:0035240">
    <property type="term" value="F:dopamine binding"/>
    <property type="evidence" value="ECO:0000315"/>
    <property type="project" value="RGD"/>
</dbReference>
<dbReference type="GO" id="GO:0004952">
    <property type="term" value="F:dopamine neurotransmitter receptor activity"/>
    <property type="evidence" value="ECO:0000266"/>
    <property type="project" value="RGD"/>
</dbReference>
<dbReference type="GO" id="GO:0001588">
    <property type="term" value="F:dopamine neurotransmitter receptor activity, coupled via Gs"/>
    <property type="evidence" value="ECO:0000314"/>
    <property type="project" value="RGD"/>
</dbReference>
<dbReference type="GO" id="GO:0004930">
    <property type="term" value="F:G protein-coupled receptor activity"/>
    <property type="evidence" value="ECO:0000314"/>
    <property type="project" value="RGD"/>
</dbReference>
<dbReference type="GO" id="GO:0004993">
    <property type="term" value="F:G protein-coupled serotonin receptor activity"/>
    <property type="evidence" value="ECO:0000318"/>
    <property type="project" value="GO_Central"/>
</dbReference>
<dbReference type="GO" id="GO:0001965">
    <property type="term" value="F:G-protein alpha-subunit binding"/>
    <property type="evidence" value="ECO:0000353"/>
    <property type="project" value="RGD"/>
</dbReference>
<dbReference type="GO" id="GO:1901363">
    <property type="term" value="F:heterocyclic compound binding"/>
    <property type="evidence" value="ECO:0000353"/>
    <property type="project" value="RGD"/>
</dbReference>
<dbReference type="GO" id="GO:0032795">
    <property type="term" value="F:heterotrimeric G-protein binding"/>
    <property type="evidence" value="ECO:0000266"/>
    <property type="project" value="RGD"/>
</dbReference>
<dbReference type="GO" id="GO:0030594">
    <property type="term" value="F:neurotransmitter receptor activity"/>
    <property type="evidence" value="ECO:0000318"/>
    <property type="project" value="GO_Central"/>
</dbReference>
<dbReference type="GO" id="GO:0019903">
    <property type="term" value="F:protein phosphatase binding"/>
    <property type="evidence" value="ECO:0000353"/>
    <property type="project" value="RGD"/>
</dbReference>
<dbReference type="GO" id="GO:0044877">
    <property type="term" value="F:protein-containing complex binding"/>
    <property type="evidence" value="ECO:0000353"/>
    <property type="project" value="RGD"/>
</dbReference>
<dbReference type="GO" id="GO:0005102">
    <property type="term" value="F:signaling receptor binding"/>
    <property type="evidence" value="ECO:0000353"/>
    <property type="project" value="RGD"/>
</dbReference>
<dbReference type="GO" id="GO:0007191">
    <property type="term" value="P:adenylate cyclase-activating dopamine receptor signaling pathway"/>
    <property type="evidence" value="ECO:0000314"/>
    <property type="project" value="BHF-UCL"/>
</dbReference>
<dbReference type="GO" id="GO:0007189">
    <property type="term" value="P:adenylate cyclase-activating G protein-coupled receptor signaling pathway"/>
    <property type="evidence" value="ECO:0000266"/>
    <property type="project" value="RGD"/>
</dbReference>
<dbReference type="GO" id="GO:0007188">
    <property type="term" value="P:adenylate cyclase-modulating G protein-coupled receptor signaling pathway"/>
    <property type="evidence" value="ECO:0000318"/>
    <property type="project" value="GO_Central"/>
</dbReference>
<dbReference type="GO" id="GO:0007628">
    <property type="term" value="P:adult walking behavior"/>
    <property type="evidence" value="ECO:0000266"/>
    <property type="project" value="RGD"/>
</dbReference>
<dbReference type="GO" id="GO:0008306">
    <property type="term" value="P:associative learning"/>
    <property type="evidence" value="ECO:0000315"/>
    <property type="project" value="RGD"/>
</dbReference>
<dbReference type="GO" id="GO:0014002">
    <property type="term" value="P:astrocyte development"/>
    <property type="evidence" value="ECO:0000266"/>
    <property type="project" value="RGD"/>
</dbReference>
<dbReference type="GO" id="GO:0001662">
    <property type="term" value="P:behavioral fear response"/>
    <property type="evidence" value="ECO:0000266"/>
    <property type="project" value="RGD"/>
</dbReference>
<dbReference type="GO" id="GO:0048148">
    <property type="term" value="P:behavioral response to cocaine"/>
    <property type="evidence" value="ECO:0000315"/>
    <property type="project" value="RGD"/>
</dbReference>
<dbReference type="GO" id="GO:0019722">
    <property type="term" value="P:calcium-mediated signaling"/>
    <property type="evidence" value="ECO:0000314"/>
    <property type="project" value="RGD"/>
</dbReference>
<dbReference type="GO" id="GO:0016477">
    <property type="term" value="P:cell migration"/>
    <property type="evidence" value="ECO:0000266"/>
    <property type="project" value="RGD"/>
</dbReference>
<dbReference type="GO" id="GO:0071870">
    <property type="term" value="P:cellular response to catecholamine stimulus"/>
    <property type="evidence" value="ECO:0000266"/>
    <property type="project" value="RGD"/>
</dbReference>
<dbReference type="GO" id="GO:0071456">
    <property type="term" value="P:cellular response to hypoxia"/>
    <property type="evidence" value="ECO:0000270"/>
    <property type="project" value="RGD"/>
</dbReference>
<dbReference type="GO" id="GO:0032869">
    <property type="term" value="P:cellular response to insulin stimulus"/>
    <property type="evidence" value="ECO:0000270"/>
    <property type="project" value="RGD"/>
</dbReference>
<dbReference type="GO" id="GO:0021853">
    <property type="term" value="P:cerebral cortex GABAergic interneuron migration"/>
    <property type="evidence" value="ECO:0000266"/>
    <property type="project" value="RGD"/>
</dbReference>
<dbReference type="GO" id="GO:0007268">
    <property type="term" value="P:chemical synaptic transmission"/>
    <property type="evidence" value="ECO:0000318"/>
    <property type="project" value="GO_Central"/>
</dbReference>
<dbReference type="GO" id="GO:0001661">
    <property type="term" value="P:conditioned taste aversion"/>
    <property type="evidence" value="ECO:0000266"/>
    <property type="project" value="RGD"/>
</dbReference>
<dbReference type="GO" id="GO:0046323">
    <property type="term" value="P:D-glucose import"/>
    <property type="evidence" value="ECO:0000266"/>
    <property type="project" value="RGD"/>
</dbReference>
<dbReference type="GO" id="GO:0021542">
    <property type="term" value="P:dentate gyrus development"/>
    <property type="evidence" value="ECO:0000266"/>
    <property type="project" value="RGD"/>
</dbReference>
<dbReference type="GO" id="GO:0015872">
    <property type="term" value="P:dopamine transport"/>
    <property type="evidence" value="ECO:0000266"/>
    <property type="project" value="RGD"/>
</dbReference>
<dbReference type="GO" id="GO:0042755">
    <property type="term" value="P:eating behavior"/>
    <property type="evidence" value="ECO:0000314"/>
    <property type="project" value="RGD"/>
</dbReference>
<dbReference type="GO" id="GO:0007631">
    <property type="term" value="P:feeding behavior"/>
    <property type="evidence" value="ECO:0000266"/>
    <property type="project" value="RGD"/>
</dbReference>
<dbReference type="GO" id="GO:0007212">
    <property type="term" value="P:G protein-coupled dopamine receptor signaling pathway"/>
    <property type="evidence" value="ECO:0000266"/>
    <property type="project" value="RGD"/>
</dbReference>
<dbReference type="GO" id="GO:0007186">
    <property type="term" value="P:G protein-coupled receptor signaling pathway"/>
    <property type="evidence" value="ECO:0000266"/>
    <property type="project" value="RGD"/>
</dbReference>
<dbReference type="GO" id="GO:0007187">
    <property type="term" value="P:G protein-coupled receptor signaling pathway, coupled to cyclic nucleotide second messenger"/>
    <property type="evidence" value="ECO:0000266"/>
    <property type="project" value="RGD"/>
</dbReference>
<dbReference type="GO" id="GO:0007625">
    <property type="term" value="P:grooming behavior"/>
    <property type="evidence" value="ECO:0000314"/>
    <property type="project" value="RGD"/>
</dbReference>
<dbReference type="GO" id="GO:0046959">
    <property type="term" value="P:habituation"/>
    <property type="evidence" value="ECO:0000266"/>
    <property type="project" value="RGD"/>
</dbReference>
<dbReference type="GO" id="GO:0021766">
    <property type="term" value="P:hippocampus development"/>
    <property type="evidence" value="ECO:0000266"/>
    <property type="project" value="RGD"/>
</dbReference>
<dbReference type="GO" id="GO:0006886">
    <property type="term" value="P:intracellular protein transport"/>
    <property type="evidence" value="ECO:0000315"/>
    <property type="project" value="RGD"/>
</dbReference>
<dbReference type="GO" id="GO:0007612">
    <property type="term" value="P:learning"/>
    <property type="evidence" value="ECO:0000266"/>
    <property type="project" value="RGD"/>
</dbReference>
<dbReference type="GO" id="GO:0007626">
    <property type="term" value="P:locomotory behavior"/>
    <property type="evidence" value="ECO:0000315"/>
    <property type="project" value="RGD"/>
</dbReference>
<dbReference type="GO" id="GO:0060292">
    <property type="term" value="P:long-term synaptic depression"/>
    <property type="evidence" value="ECO:0000266"/>
    <property type="project" value="RGD"/>
</dbReference>
<dbReference type="GO" id="GO:0060291">
    <property type="term" value="P:long-term synaptic potentiation"/>
    <property type="evidence" value="ECO:0000266"/>
    <property type="project" value="RGD"/>
</dbReference>
<dbReference type="GO" id="GO:0042711">
    <property type="term" value="P:maternal behavior"/>
    <property type="evidence" value="ECO:0000266"/>
    <property type="project" value="RGD"/>
</dbReference>
<dbReference type="GO" id="GO:0007617">
    <property type="term" value="P:mating behavior"/>
    <property type="evidence" value="ECO:0000266"/>
    <property type="project" value="RGD"/>
</dbReference>
<dbReference type="GO" id="GO:0007613">
    <property type="term" value="P:memory"/>
    <property type="evidence" value="ECO:0000266"/>
    <property type="project" value="RGD"/>
</dbReference>
<dbReference type="GO" id="GO:0099010">
    <property type="term" value="P:modification of postsynaptic structure"/>
    <property type="evidence" value="ECO:0000266"/>
    <property type="project" value="RGD"/>
</dbReference>
<dbReference type="GO" id="GO:0006936">
    <property type="term" value="P:muscle contraction"/>
    <property type="evidence" value="ECO:0000266"/>
    <property type="project" value="RGD"/>
</dbReference>
<dbReference type="GO" id="GO:0030336">
    <property type="term" value="P:negative regulation of cell migration"/>
    <property type="evidence" value="ECO:0000315"/>
    <property type="project" value="RGD"/>
</dbReference>
<dbReference type="GO" id="GO:1900038">
    <property type="term" value="P:negative regulation of cellular response to hypoxia"/>
    <property type="evidence" value="ECO:0000315"/>
    <property type="project" value="RGD"/>
</dbReference>
<dbReference type="GO" id="GO:0042321">
    <property type="term" value="P:negative regulation of circadian sleep/wake cycle, sleep"/>
    <property type="evidence" value="ECO:0000314"/>
    <property type="project" value="RGD"/>
</dbReference>
<dbReference type="GO" id="GO:0050805">
    <property type="term" value="P:negative regulation of synaptic transmission"/>
    <property type="evidence" value="ECO:0000314"/>
    <property type="project" value="RGD"/>
</dbReference>
<dbReference type="GO" id="GO:0001764">
    <property type="term" value="P:neuron migration"/>
    <property type="evidence" value="ECO:0000266"/>
    <property type="project" value="RGD"/>
</dbReference>
<dbReference type="GO" id="GO:0019228">
    <property type="term" value="P:neuronal action potential"/>
    <property type="evidence" value="ECO:0000266"/>
    <property type="project" value="RGD"/>
</dbReference>
<dbReference type="GO" id="GO:0035106">
    <property type="term" value="P:operant conditioning"/>
    <property type="evidence" value="ECO:0000315"/>
    <property type="project" value="RGD"/>
</dbReference>
<dbReference type="GO" id="GO:0021769">
    <property type="term" value="P:orbitofrontal cortex development"/>
    <property type="evidence" value="ECO:0000270"/>
    <property type="project" value="RGD"/>
</dbReference>
<dbReference type="GO" id="GO:0030432">
    <property type="term" value="P:peristalsis"/>
    <property type="evidence" value="ECO:0000266"/>
    <property type="project" value="RGD"/>
</dbReference>
<dbReference type="GO" id="GO:0060158">
    <property type="term" value="P:phospholipase C-activating dopamine receptor signaling pathway"/>
    <property type="evidence" value="ECO:0000266"/>
    <property type="project" value="RGD"/>
</dbReference>
<dbReference type="GO" id="GO:2000253">
    <property type="term" value="P:positive regulation of feeding behavior"/>
    <property type="evidence" value="ECO:0000315"/>
    <property type="project" value="RGD"/>
</dbReference>
<dbReference type="GO" id="GO:1900273">
    <property type="term" value="P:positive regulation of long-term synaptic potentiation"/>
    <property type="evidence" value="ECO:0000315"/>
    <property type="project" value="RGD"/>
</dbReference>
<dbReference type="GO" id="GO:0045838">
    <property type="term" value="P:positive regulation of membrane potential"/>
    <property type="evidence" value="ECO:0000315"/>
    <property type="project" value="RGD"/>
</dbReference>
<dbReference type="GO" id="GO:2001224">
    <property type="term" value="P:positive regulation of neuron migration"/>
    <property type="evidence" value="ECO:0000266"/>
    <property type="project" value="RGD"/>
</dbReference>
<dbReference type="GO" id="GO:0051281">
    <property type="term" value="P:positive regulation of release of sequestered calcium ion into cytosol"/>
    <property type="evidence" value="ECO:0000266"/>
    <property type="project" value="RGD"/>
</dbReference>
<dbReference type="GO" id="GO:0051968">
    <property type="term" value="P:positive regulation of synaptic transmission, glutamatergic"/>
    <property type="evidence" value="ECO:0000266"/>
    <property type="project" value="RGD"/>
</dbReference>
<dbReference type="GO" id="GO:0099170">
    <property type="term" value="P:postsynaptic modulation of chemical synaptic transmission"/>
    <property type="evidence" value="ECO:0000314"/>
    <property type="project" value="SynGO"/>
</dbReference>
<dbReference type="GO" id="GO:0099171">
    <property type="term" value="P:presynaptic modulation of chemical synaptic transmission"/>
    <property type="evidence" value="ECO:0000266"/>
    <property type="project" value="RGD"/>
</dbReference>
<dbReference type="GO" id="GO:0006606">
    <property type="term" value="P:protein import into nucleus"/>
    <property type="evidence" value="ECO:0000266"/>
    <property type="project" value="RGD"/>
</dbReference>
<dbReference type="GO" id="GO:0042053">
    <property type="term" value="P:regulation of dopamine metabolic process"/>
    <property type="evidence" value="ECO:0000266"/>
    <property type="project" value="RGD"/>
</dbReference>
<dbReference type="GO" id="GO:0043269">
    <property type="term" value="P:regulation of monoatomic ion transport"/>
    <property type="evidence" value="ECO:0000314"/>
    <property type="project" value="RGD"/>
</dbReference>
<dbReference type="GO" id="GO:0019229">
    <property type="term" value="P:regulation of vasoconstriction"/>
    <property type="evidence" value="ECO:0000315"/>
    <property type="project" value="RGD"/>
</dbReference>
<dbReference type="GO" id="GO:0014823">
    <property type="term" value="P:response to activity"/>
    <property type="evidence" value="ECO:0000270"/>
    <property type="project" value="RGD"/>
</dbReference>
<dbReference type="GO" id="GO:0043200">
    <property type="term" value="P:response to amino acid"/>
    <property type="evidence" value="ECO:0000270"/>
    <property type="project" value="RGD"/>
</dbReference>
<dbReference type="GO" id="GO:0001975">
    <property type="term" value="P:response to amphetamine"/>
    <property type="evidence" value="ECO:0000270"/>
    <property type="project" value="RGD"/>
</dbReference>
<dbReference type="GO" id="GO:0042220">
    <property type="term" value="P:response to cocaine"/>
    <property type="evidence" value="ECO:0000266"/>
    <property type="project" value="RGD"/>
</dbReference>
<dbReference type="GO" id="GO:0032355">
    <property type="term" value="P:response to estradiol"/>
    <property type="evidence" value="ECO:0000270"/>
    <property type="project" value="RGD"/>
</dbReference>
<dbReference type="GO" id="GO:0045471">
    <property type="term" value="P:response to ethanol"/>
    <property type="evidence" value="ECO:0000270"/>
    <property type="project" value="RGD"/>
</dbReference>
<dbReference type="GO" id="GO:0032094">
    <property type="term" value="P:response to food"/>
    <property type="evidence" value="ECO:0000270"/>
    <property type="project" value="RGD"/>
</dbReference>
<dbReference type="GO" id="GO:0035094">
    <property type="term" value="P:response to nicotine"/>
    <property type="evidence" value="ECO:0000270"/>
    <property type="project" value="RGD"/>
</dbReference>
<dbReference type="GO" id="GO:0032526">
    <property type="term" value="P:response to retinoic acid"/>
    <property type="evidence" value="ECO:0000270"/>
    <property type="project" value="RGD"/>
</dbReference>
<dbReference type="GO" id="GO:0048545">
    <property type="term" value="P:response to steroid hormone"/>
    <property type="evidence" value="ECO:0000270"/>
    <property type="project" value="RGD"/>
</dbReference>
<dbReference type="GO" id="GO:0009410">
    <property type="term" value="P:response to xenobiotic stimulus"/>
    <property type="evidence" value="ECO:0000270"/>
    <property type="project" value="RGD"/>
</dbReference>
<dbReference type="GO" id="GO:0046960">
    <property type="term" value="P:sensitization"/>
    <property type="evidence" value="ECO:0000266"/>
    <property type="project" value="RGD"/>
</dbReference>
<dbReference type="GO" id="GO:0035176">
    <property type="term" value="P:social behavior"/>
    <property type="evidence" value="ECO:0000315"/>
    <property type="project" value="RGD"/>
</dbReference>
<dbReference type="GO" id="GO:0021756">
    <property type="term" value="P:striatum development"/>
    <property type="evidence" value="ECO:0000270"/>
    <property type="project" value="RGD"/>
</dbReference>
<dbReference type="GO" id="GO:0007416">
    <property type="term" value="P:synapse assembly"/>
    <property type="evidence" value="ECO:0000270"/>
    <property type="project" value="BHF-UCL"/>
</dbReference>
<dbReference type="GO" id="GO:0001963">
    <property type="term" value="P:synaptic transmission, dopaminergic"/>
    <property type="evidence" value="ECO:0000266"/>
    <property type="project" value="RGD"/>
</dbReference>
<dbReference type="GO" id="GO:0035249">
    <property type="term" value="P:synaptic transmission, glutamatergic"/>
    <property type="evidence" value="ECO:0000266"/>
    <property type="project" value="RGD"/>
</dbReference>
<dbReference type="GO" id="GO:0001659">
    <property type="term" value="P:temperature homeostasis"/>
    <property type="evidence" value="ECO:0000266"/>
    <property type="project" value="RGD"/>
</dbReference>
<dbReference type="GO" id="GO:0019226">
    <property type="term" value="P:transmission of nerve impulse"/>
    <property type="evidence" value="ECO:0000266"/>
    <property type="project" value="RGD"/>
</dbReference>
<dbReference type="GO" id="GO:0042311">
    <property type="term" value="P:vasodilation"/>
    <property type="evidence" value="ECO:0007669"/>
    <property type="project" value="InterPro"/>
</dbReference>
<dbReference type="GO" id="GO:0008542">
    <property type="term" value="P:visual learning"/>
    <property type="evidence" value="ECO:0000266"/>
    <property type="project" value="RGD"/>
</dbReference>
<dbReference type="FunFam" id="1.20.1070.10:FF:000045">
    <property type="entry name" value="D(1A) dopamine receptor"/>
    <property type="match status" value="1"/>
</dbReference>
<dbReference type="Gene3D" id="1.20.1070.10">
    <property type="entry name" value="Rhodopsin 7-helix transmembrane proteins"/>
    <property type="match status" value="1"/>
</dbReference>
<dbReference type="InterPro" id="IPR001413">
    <property type="entry name" value="Dopamine_D1_rcpt"/>
</dbReference>
<dbReference type="InterPro" id="IPR000929">
    <property type="entry name" value="Dopamine_rcpt"/>
</dbReference>
<dbReference type="InterPro" id="IPR000276">
    <property type="entry name" value="GPCR_Rhodpsn"/>
</dbReference>
<dbReference type="InterPro" id="IPR017452">
    <property type="entry name" value="GPCR_Rhodpsn_7TM"/>
</dbReference>
<dbReference type="PANTHER" id="PTHR24248">
    <property type="entry name" value="ADRENERGIC RECEPTOR-RELATED G-PROTEIN COUPLED RECEPTOR"/>
    <property type="match status" value="1"/>
</dbReference>
<dbReference type="PANTHER" id="PTHR24248:SF139">
    <property type="entry name" value="D(1A) DOPAMINE RECEPTOR"/>
    <property type="match status" value="1"/>
</dbReference>
<dbReference type="Pfam" id="PF00001">
    <property type="entry name" value="7tm_1"/>
    <property type="match status" value="1"/>
</dbReference>
<dbReference type="PRINTS" id="PR00565">
    <property type="entry name" value="DOPAMINED1AR"/>
</dbReference>
<dbReference type="PRINTS" id="PR00242">
    <property type="entry name" value="DOPAMINER"/>
</dbReference>
<dbReference type="PRINTS" id="PR00237">
    <property type="entry name" value="GPCRRHODOPSN"/>
</dbReference>
<dbReference type="SMART" id="SM01381">
    <property type="entry name" value="7TM_GPCR_Srsx"/>
    <property type="match status" value="1"/>
</dbReference>
<dbReference type="SUPFAM" id="SSF81321">
    <property type="entry name" value="Family A G protein-coupled receptor-like"/>
    <property type="match status" value="1"/>
</dbReference>
<dbReference type="PROSITE" id="PS00237">
    <property type="entry name" value="G_PROTEIN_RECEP_F1_1"/>
    <property type="match status" value="1"/>
</dbReference>
<dbReference type="PROSITE" id="PS50262">
    <property type="entry name" value="G_PROTEIN_RECEP_F1_2"/>
    <property type="match status" value="1"/>
</dbReference>
<keyword id="KW-1003">Cell membrane</keyword>
<keyword id="KW-0966">Cell projection</keyword>
<keyword id="KW-1015">Disulfide bond</keyword>
<keyword id="KW-0256">Endoplasmic reticulum</keyword>
<keyword id="KW-0297">G-protein coupled receptor</keyword>
<keyword id="KW-0325">Glycoprotein</keyword>
<keyword id="KW-0449">Lipoprotein</keyword>
<keyword id="KW-0472">Membrane</keyword>
<keyword id="KW-0564">Palmitate</keyword>
<keyword id="KW-0675">Receptor</keyword>
<keyword id="KW-1185">Reference proteome</keyword>
<keyword id="KW-0770">Synapse</keyword>
<keyword id="KW-0807">Transducer</keyword>
<keyword id="KW-0812">Transmembrane</keyword>
<keyword id="KW-1133">Transmembrane helix</keyword>
<comment type="function">
    <text>Dopamine receptor whose activity is mediated by G proteins which activate adenylyl cyclase.</text>
</comment>
<comment type="subunit">
    <text evidence="2 5">Interacts with DNAJC14 via its C-terminus PubMed:11331877. Interacts with DRD2 (By similarity). Interacts with DORIP1 (By similarity).</text>
</comment>
<comment type="subcellular location">
    <subcellularLocation>
        <location evidence="5">Cell membrane</location>
        <topology evidence="5">Multi-pass membrane protein</topology>
    </subcellularLocation>
    <subcellularLocation>
        <location evidence="5">Endoplasmic reticulum membrane</location>
        <topology evidence="5">Multi-pass membrane protein</topology>
    </subcellularLocation>
    <subcellularLocation>
        <location evidence="2">Cell projection</location>
        <location evidence="2">Dendrite</location>
    </subcellularLocation>
    <subcellularLocation>
        <location evidence="1">Cell projection</location>
        <location evidence="1">Cilium membrane</location>
        <topology evidence="3">Multi-pass membrane protein</topology>
    </subcellularLocation>
    <subcellularLocation>
        <location evidence="2">Cell projection</location>
        <location evidence="2">Dendritic spine</location>
    </subcellularLocation>
    <text evidence="5">Transport from the endoplasmic reticulum to the cell surface is regulated by interaction with DNAJC14.</text>
</comment>
<comment type="tissue specificity">
    <text>Brain, in the striatum, the nucleus accumbens, and the olfactory tubercle.</text>
</comment>
<comment type="PTM">
    <text evidence="5">N-glycosylated.</text>
</comment>
<comment type="similarity">
    <text evidence="4">Belongs to the G-protein coupled receptor 1 family.</text>
</comment>
<feature type="chain" id="PRO_0000069378" description="D(1A) dopamine receptor">
    <location>
        <begin position="1"/>
        <end position="446"/>
    </location>
</feature>
<feature type="topological domain" description="Extracellular" evidence="3">
    <location>
        <begin position="1"/>
        <end position="22"/>
    </location>
</feature>
<feature type="transmembrane region" description="Helical; Name=1" evidence="3">
    <location>
        <begin position="23"/>
        <end position="48"/>
    </location>
</feature>
<feature type="topological domain" description="Cytoplasmic" evidence="3">
    <location>
        <begin position="49"/>
        <end position="59"/>
    </location>
</feature>
<feature type="transmembrane region" description="Helical; Name=2" evidence="3">
    <location>
        <begin position="60"/>
        <end position="86"/>
    </location>
</feature>
<feature type="topological domain" description="Extracellular" evidence="3">
    <location>
        <begin position="87"/>
        <end position="95"/>
    </location>
</feature>
<feature type="transmembrane region" description="Helical; Name=3" evidence="3">
    <location>
        <begin position="96"/>
        <end position="118"/>
    </location>
</feature>
<feature type="topological domain" description="Cytoplasmic" evidence="3">
    <location>
        <begin position="119"/>
        <end position="137"/>
    </location>
</feature>
<feature type="transmembrane region" description="Helical; Name=4" evidence="3">
    <location>
        <begin position="138"/>
        <end position="162"/>
    </location>
</feature>
<feature type="topological domain" description="Extracellular" evidence="3">
    <location>
        <begin position="163"/>
        <end position="192"/>
    </location>
</feature>
<feature type="transmembrane region" description="Helical; Name=5" evidence="3">
    <location>
        <begin position="193"/>
        <end position="218"/>
    </location>
</feature>
<feature type="topological domain" description="Cytoplasmic" evidence="3">
    <location>
        <begin position="219"/>
        <end position="272"/>
    </location>
</feature>
<feature type="transmembrane region" description="Helical; Name=6" evidence="3">
    <location>
        <begin position="273"/>
        <end position="299"/>
    </location>
</feature>
<feature type="topological domain" description="Extracellular" evidence="3">
    <location>
        <begin position="300"/>
        <end position="312"/>
    </location>
</feature>
<feature type="transmembrane region" description="Helical; Name=7" evidence="3">
    <location>
        <begin position="313"/>
        <end position="337"/>
    </location>
</feature>
<feature type="topological domain" description="Cytoplasmic" evidence="3">
    <location>
        <begin position="338"/>
        <end position="446"/>
    </location>
</feature>
<feature type="lipid moiety-binding region" description="S-palmitoyl cysteine" evidence="1">
    <location>
        <position position="347"/>
    </location>
</feature>
<feature type="lipid moiety-binding region" description="S-palmitoyl cysteine" evidence="1">
    <location>
        <position position="351"/>
    </location>
</feature>
<feature type="glycosylation site" description="N-linked (GlcNAc...) asparagine" evidence="3">
    <location>
        <position position="4"/>
    </location>
</feature>
<feature type="disulfide bond" evidence="4">
    <location>
        <begin position="95"/>
        <end position="186"/>
    </location>
</feature>
<feature type="mutagenesis site" description="Loss of interaction with DNAJC14. Abolishes transport to the cell surface." evidence="5">
    <original>F</original>
    <variation>A</variation>
    <location>
        <position position="333"/>
    </location>
</feature>
<feature type="mutagenesis site" description="Loss of interaction with DNAJC14. Abolishes transport to the cell surface." evidence="5">
    <original>F</original>
    <variation>A</variation>
    <location>
        <position position="337"/>
    </location>
</feature>
<feature type="mutagenesis site" description="Loss of interaction with DNAJC14. Abolishes transport to the cell surface." evidence="5">
    <original>F</original>
    <variation>A</variation>
    <location>
        <position position="341"/>
    </location>
</feature>
<feature type="sequence conflict" description="In Ref. 3." evidence="6" ref="3">
    <original>L</original>
    <variation>F</variation>
    <location>
        <position position="91"/>
    </location>
</feature>
<feature type="sequence conflict" description="In Ref. 3." evidence="6" ref="3">
    <original>P</original>
    <variation>S</variation>
    <location>
        <position position="93"/>
    </location>
</feature>
<feature type="sequence conflict" description="In Ref. 2." evidence="6" ref="2">
    <original>A</original>
    <variation>T</variation>
    <location>
        <position position="165"/>
    </location>
</feature>
<feature type="sequence conflict" description="In Ref. 2." evidence="6" ref="2">
    <original>L</original>
    <variation>F</variation>
    <location>
        <position position="190"/>
    </location>
</feature>
<feature type="sequence conflict" description="In Ref. 2." evidence="6" ref="2">
    <original>R</original>
    <variation>G</variation>
    <location>
        <position position="227"/>
    </location>
</feature>
<feature type="sequence conflict" description="In Ref. 2." evidence="6" ref="2">
    <original>C</original>
    <variation>W</variation>
    <location>
        <position position="253"/>
    </location>
</feature>
<evidence type="ECO:0000250" key="1">
    <source>
        <dbReference type="UniProtKB" id="P21728"/>
    </source>
</evidence>
<evidence type="ECO:0000250" key="2">
    <source>
        <dbReference type="UniProtKB" id="Q61616"/>
    </source>
</evidence>
<evidence type="ECO:0000255" key="3"/>
<evidence type="ECO:0000255" key="4">
    <source>
        <dbReference type="PROSITE-ProRule" id="PRU00521"/>
    </source>
</evidence>
<evidence type="ECO:0000269" key="5">
    <source>
    </source>
</evidence>
<evidence type="ECO:0000305" key="6"/>
<protein>
    <recommendedName>
        <fullName>D(1A) dopamine receptor</fullName>
    </recommendedName>
    <alternativeName>
        <fullName>Dopamine D1 receptor</fullName>
    </alternativeName>
</protein>
<gene>
    <name type="primary">Drd1</name>
    <name type="synonym">Drd1a</name>
</gene>
<reference key="1">
    <citation type="journal article" date="1990" name="Proc. Natl. Acad. Sci. U.S.A.">
        <title>Molecular cloning and expression of a D1 dopamine receptor linked to adenylyl cyclase activation.</title>
        <authorList>
            <person name="Monsma F.J. Jr."/>
            <person name="Mahan L.C."/>
            <person name="McVittie L.D."/>
            <person name="Gerfen C.R."/>
            <person name="Sibley D.R."/>
        </authorList>
    </citation>
    <scope>NUCLEOTIDE SEQUENCE [MRNA]</scope>
    <source>
        <strain>Sprague-Dawley</strain>
    </source>
</reference>
<reference key="2">
    <citation type="journal article" date="1990" name="Nature">
        <title>Cloning and expression of human and rat D1 dopamine receptors.</title>
        <authorList>
            <person name="Zhou Q.-Y."/>
            <person name="Grandy D.K."/>
            <person name="Thambi L."/>
            <person name="Kushner J.A."/>
            <person name="van Tol H.H.M."/>
            <person name="Cone R."/>
            <person name="Pribnow D."/>
            <person name="Salon J."/>
            <person name="Bunzow J.R."/>
            <person name="Civelli O."/>
        </authorList>
    </citation>
    <scope>NUCLEOTIDE SEQUENCE [MRNA]</scope>
</reference>
<reference key="3">
    <citation type="journal article" date="1992" name="J. Neurochem.">
        <title>Characterization of gene organization and promoter region of the rat dopamine D1 receptor gene.</title>
        <authorList>
            <person name="Zhou Q.Y."/>
            <person name="Li C."/>
            <person name="Civelli O."/>
        </authorList>
    </citation>
    <scope>NUCLEOTIDE SEQUENCE [GENOMIC DNA]</scope>
</reference>
<reference key="4">
    <citation type="journal article" date="1990" name="FEBS Lett.">
        <title>Cloning of two additional catecholamine receptors from rat brain.</title>
        <authorList>
            <person name="O'Dowd B.F."/>
            <person name="Nguyen T."/>
            <person name="Tirpak A."/>
            <person name="Jarvie K.R."/>
            <person name="Israel Y."/>
            <person name="Seeman P."/>
            <person name="Niznik H.B."/>
        </authorList>
    </citation>
    <scope>NUCLEOTIDE SEQUENCE OF 114-263</scope>
    <source>
        <tissue>Corpus striatum</tissue>
    </source>
</reference>
<reference key="5">
    <citation type="journal article" date="2001" name="Nat. Cell Biol.">
        <title>Regulation of transport of the dopamine D1 receptor by a new membrane-associated ER protein.</title>
        <authorList>
            <person name="Bermak J.C."/>
            <person name="Li M."/>
            <person name="Bullock C.M."/>
            <person name="Zhou Q.-Y."/>
        </authorList>
    </citation>
    <scope>INTERACTION WITH DNAJC14</scope>
    <scope>GLYCOSYLATION</scope>
    <scope>MUTAGENESIS OF PHE-333; PHE-337 AND PHE-341</scope>
    <scope>SUBCELLULAR LOCATION</scope>
</reference>
<organism>
    <name type="scientific">Rattus norvegicus</name>
    <name type="common">Rat</name>
    <dbReference type="NCBI Taxonomy" id="10116"/>
    <lineage>
        <taxon>Eukaryota</taxon>
        <taxon>Metazoa</taxon>
        <taxon>Chordata</taxon>
        <taxon>Craniata</taxon>
        <taxon>Vertebrata</taxon>
        <taxon>Euteleostomi</taxon>
        <taxon>Mammalia</taxon>
        <taxon>Eutheria</taxon>
        <taxon>Euarchontoglires</taxon>
        <taxon>Glires</taxon>
        <taxon>Rodentia</taxon>
        <taxon>Myomorpha</taxon>
        <taxon>Muroidea</taxon>
        <taxon>Muridae</taxon>
        <taxon>Murinae</taxon>
        <taxon>Rattus</taxon>
    </lineage>
</organism>